<name>FOLD_SHEPA</name>
<keyword id="KW-0028">Amino-acid biosynthesis</keyword>
<keyword id="KW-0368">Histidine biosynthesis</keyword>
<keyword id="KW-0378">Hydrolase</keyword>
<keyword id="KW-0486">Methionine biosynthesis</keyword>
<keyword id="KW-0511">Multifunctional enzyme</keyword>
<keyword id="KW-0521">NADP</keyword>
<keyword id="KW-0554">One-carbon metabolism</keyword>
<keyword id="KW-0560">Oxidoreductase</keyword>
<keyword id="KW-0658">Purine biosynthesis</keyword>
<keyword id="KW-1185">Reference proteome</keyword>
<comment type="function">
    <text evidence="1">Catalyzes the oxidation of 5,10-methylenetetrahydrofolate to 5,10-methenyltetrahydrofolate and then the hydrolysis of 5,10-methenyltetrahydrofolate to 10-formyltetrahydrofolate.</text>
</comment>
<comment type="catalytic activity">
    <reaction evidence="1">
        <text>(6R)-5,10-methylene-5,6,7,8-tetrahydrofolate + NADP(+) = (6R)-5,10-methenyltetrahydrofolate + NADPH</text>
        <dbReference type="Rhea" id="RHEA:22812"/>
        <dbReference type="ChEBI" id="CHEBI:15636"/>
        <dbReference type="ChEBI" id="CHEBI:57455"/>
        <dbReference type="ChEBI" id="CHEBI:57783"/>
        <dbReference type="ChEBI" id="CHEBI:58349"/>
        <dbReference type="EC" id="1.5.1.5"/>
    </reaction>
</comment>
<comment type="catalytic activity">
    <reaction evidence="1">
        <text>(6R)-5,10-methenyltetrahydrofolate + H2O = (6R)-10-formyltetrahydrofolate + H(+)</text>
        <dbReference type="Rhea" id="RHEA:23700"/>
        <dbReference type="ChEBI" id="CHEBI:15377"/>
        <dbReference type="ChEBI" id="CHEBI:15378"/>
        <dbReference type="ChEBI" id="CHEBI:57455"/>
        <dbReference type="ChEBI" id="CHEBI:195366"/>
        <dbReference type="EC" id="3.5.4.9"/>
    </reaction>
</comment>
<comment type="pathway">
    <text evidence="1">One-carbon metabolism; tetrahydrofolate interconversion.</text>
</comment>
<comment type="subunit">
    <text evidence="1">Homodimer.</text>
</comment>
<comment type="similarity">
    <text evidence="1">Belongs to the tetrahydrofolate dehydrogenase/cyclohydrolase family.</text>
</comment>
<reference key="1">
    <citation type="submission" date="2007-10" db="EMBL/GenBank/DDBJ databases">
        <title>Complete sequence of Shewanella pealeana ATCC 700345.</title>
        <authorList>
            <consortium name="US DOE Joint Genome Institute"/>
            <person name="Copeland A."/>
            <person name="Lucas S."/>
            <person name="Lapidus A."/>
            <person name="Barry K."/>
            <person name="Glavina del Rio T."/>
            <person name="Dalin E."/>
            <person name="Tice H."/>
            <person name="Pitluck S."/>
            <person name="Chertkov O."/>
            <person name="Brettin T."/>
            <person name="Bruce D."/>
            <person name="Detter J.C."/>
            <person name="Han C."/>
            <person name="Schmutz J."/>
            <person name="Larimer F."/>
            <person name="Land M."/>
            <person name="Hauser L."/>
            <person name="Kyrpides N."/>
            <person name="Kim E."/>
            <person name="Zhao J.-S.Z."/>
            <person name="Manno D."/>
            <person name="Hawari J."/>
            <person name="Richardson P."/>
        </authorList>
    </citation>
    <scope>NUCLEOTIDE SEQUENCE [LARGE SCALE GENOMIC DNA]</scope>
    <source>
        <strain>ATCC 700345 / ANG-SQ1</strain>
    </source>
</reference>
<gene>
    <name evidence="1" type="primary">folD</name>
    <name type="ordered locus">Spea_2683</name>
</gene>
<evidence type="ECO:0000255" key="1">
    <source>
        <dbReference type="HAMAP-Rule" id="MF_01576"/>
    </source>
</evidence>
<dbReference type="EC" id="1.5.1.5" evidence="1"/>
<dbReference type="EC" id="3.5.4.9" evidence="1"/>
<dbReference type="EMBL" id="CP000851">
    <property type="protein sequence ID" value="ABV88003.1"/>
    <property type="molecule type" value="Genomic_DNA"/>
</dbReference>
<dbReference type="RefSeq" id="WP_012155909.1">
    <property type="nucleotide sequence ID" value="NC_009901.1"/>
</dbReference>
<dbReference type="SMR" id="A8H616"/>
<dbReference type="STRING" id="398579.Spea_2683"/>
<dbReference type="KEGG" id="spl:Spea_2683"/>
<dbReference type="eggNOG" id="COG0190">
    <property type="taxonomic scope" value="Bacteria"/>
</dbReference>
<dbReference type="HOGENOM" id="CLU_034045_2_1_6"/>
<dbReference type="OrthoDB" id="9803580at2"/>
<dbReference type="UniPathway" id="UPA00193"/>
<dbReference type="Proteomes" id="UP000002608">
    <property type="component" value="Chromosome"/>
</dbReference>
<dbReference type="GO" id="GO:0005829">
    <property type="term" value="C:cytosol"/>
    <property type="evidence" value="ECO:0007669"/>
    <property type="project" value="TreeGrafter"/>
</dbReference>
<dbReference type="GO" id="GO:0004477">
    <property type="term" value="F:methenyltetrahydrofolate cyclohydrolase activity"/>
    <property type="evidence" value="ECO:0007669"/>
    <property type="project" value="UniProtKB-UniRule"/>
</dbReference>
<dbReference type="GO" id="GO:0004488">
    <property type="term" value="F:methylenetetrahydrofolate dehydrogenase (NADP+) activity"/>
    <property type="evidence" value="ECO:0007669"/>
    <property type="project" value="UniProtKB-UniRule"/>
</dbReference>
<dbReference type="GO" id="GO:0000105">
    <property type="term" value="P:L-histidine biosynthetic process"/>
    <property type="evidence" value="ECO:0007669"/>
    <property type="project" value="UniProtKB-KW"/>
</dbReference>
<dbReference type="GO" id="GO:0009086">
    <property type="term" value="P:methionine biosynthetic process"/>
    <property type="evidence" value="ECO:0007669"/>
    <property type="project" value="UniProtKB-KW"/>
</dbReference>
<dbReference type="GO" id="GO:0006164">
    <property type="term" value="P:purine nucleotide biosynthetic process"/>
    <property type="evidence" value="ECO:0007669"/>
    <property type="project" value="UniProtKB-KW"/>
</dbReference>
<dbReference type="GO" id="GO:0035999">
    <property type="term" value="P:tetrahydrofolate interconversion"/>
    <property type="evidence" value="ECO:0007669"/>
    <property type="project" value="UniProtKB-UniRule"/>
</dbReference>
<dbReference type="CDD" id="cd01080">
    <property type="entry name" value="NAD_bind_m-THF_DH_Cyclohyd"/>
    <property type="match status" value="1"/>
</dbReference>
<dbReference type="FunFam" id="3.40.50.10860:FF:000001">
    <property type="entry name" value="Bifunctional protein FolD"/>
    <property type="match status" value="1"/>
</dbReference>
<dbReference type="FunFam" id="3.40.50.720:FF:000006">
    <property type="entry name" value="Bifunctional protein FolD"/>
    <property type="match status" value="1"/>
</dbReference>
<dbReference type="Gene3D" id="3.40.50.10860">
    <property type="entry name" value="Leucine Dehydrogenase, chain A, domain 1"/>
    <property type="match status" value="1"/>
</dbReference>
<dbReference type="Gene3D" id="3.40.50.720">
    <property type="entry name" value="NAD(P)-binding Rossmann-like Domain"/>
    <property type="match status" value="1"/>
</dbReference>
<dbReference type="HAMAP" id="MF_01576">
    <property type="entry name" value="THF_DHG_CYH"/>
    <property type="match status" value="1"/>
</dbReference>
<dbReference type="InterPro" id="IPR046346">
    <property type="entry name" value="Aminoacid_DH-like_N_sf"/>
</dbReference>
<dbReference type="InterPro" id="IPR036291">
    <property type="entry name" value="NAD(P)-bd_dom_sf"/>
</dbReference>
<dbReference type="InterPro" id="IPR000672">
    <property type="entry name" value="THF_DH/CycHdrlase"/>
</dbReference>
<dbReference type="InterPro" id="IPR020630">
    <property type="entry name" value="THF_DH/CycHdrlase_cat_dom"/>
</dbReference>
<dbReference type="InterPro" id="IPR020867">
    <property type="entry name" value="THF_DH/CycHdrlase_CS"/>
</dbReference>
<dbReference type="InterPro" id="IPR020631">
    <property type="entry name" value="THF_DH/CycHdrlase_NAD-bd_dom"/>
</dbReference>
<dbReference type="NCBIfam" id="NF008058">
    <property type="entry name" value="PRK10792.1"/>
    <property type="match status" value="1"/>
</dbReference>
<dbReference type="NCBIfam" id="NF010783">
    <property type="entry name" value="PRK14186.1"/>
    <property type="match status" value="1"/>
</dbReference>
<dbReference type="PANTHER" id="PTHR48099:SF5">
    <property type="entry name" value="C-1-TETRAHYDROFOLATE SYNTHASE, CYTOPLASMIC"/>
    <property type="match status" value="1"/>
</dbReference>
<dbReference type="PANTHER" id="PTHR48099">
    <property type="entry name" value="C-1-TETRAHYDROFOLATE SYNTHASE, CYTOPLASMIC-RELATED"/>
    <property type="match status" value="1"/>
</dbReference>
<dbReference type="Pfam" id="PF00763">
    <property type="entry name" value="THF_DHG_CYH"/>
    <property type="match status" value="1"/>
</dbReference>
<dbReference type="Pfam" id="PF02882">
    <property type="entry name" value="THF_DHG_CYH_C"/>
    <property type="match status" value="1"/>
</dbReference>
<dbReference type="PRINTS" id="PR00085">
    <property type="entry name" value="THFDHDRGNASE"/>
</dbReference>
<dbReference type="SUPFAM" id="SSF53223">
    <property type="entry name" value="Aminoacid dehydrogenase-like, N-terminal domain"/>
    <property type="match status" value="1"/>
</dbReference>
<dbReference type="SUPFAM" id="SSF51735">
    <property type="entry name" value="NAD(P)-binding Rossmann-fold domains"/>
    <property type="match status" value="1"/>
</dbReference>
<dbReference type="PROSITE" id="PS00767">
    <property type="entry name" value="THF_DHG_CYH_2"/>
    <property type="match status" value="1"/>
</dbReference>
<organism>
    <name type="scientific">Shewanella pealeana (strain ATCC 700345 / ANG-SQ1)</name>
    <dbReference type="NCBI Taxonomy" id="398579"/>
    <lineage>
        <taxon>Bacteria</taxon>
        <taxon>Pseudomonadati</taxon>
        <taxon>Pseudomonadota</taxon>
        <taxon>Gammaproteobacteria</taxon>
        <taxon>Alteromonadales</taxon>
        <taxon>Shewanellaceae</taxon>
        <taxon>Shewanella</taxon>
    </lineage>
</organism>
<accession>A8H616</accession>
<protein>
    <recommendedName>
        <fullName evidence="1">Bifunctional protein FolD</fullName>
    </recommendedName>
    <domain>
        <recommendedName>
            <fullName evidence="1">Methylenetetrahydrofolate dehydrogenase</fullName>
            <ecNumber evidence="1">1.5.1.5</ecNumber>
        </recommendedName>
    </domain>
    <domain>
        <recommendedName>
            <fullName evidence="1">Methenyltetrahydrofolate cyclohydrolase</fullName>
            <ecNumber evidence="1">3.5.4.9</ecNumber>
        </recommendedName>
    </domain>
</protein>
<sequence length="284" mass="30494">MTAQNIDGKAIAQSIRTQLKDKVTARKEAGKRVPGLAVILVGADPASQVYVGSKRKACEEVGFISRSYDLDSSTSEDALLSLIDECNEDPTIDGILVQLPLPEHIEESKVIERIRPDKDVDGFHPYNVGRLAQRIPVLRSCTPMGIMTLLKSTGVDTFGLDAVVVGASNIVGRPMSLELLLAGCTTTTCHRFTRNLEDKVRSADLVVVAVGKPGFIPGDWIKPGAIVIDVGINRLESGQLVGDVEFDVASQHASFITPVPGGVGPMTIASLLENTLYACEQYHD</sequence>
<feature type="chain" id="PRO_1000087919" description="Bifunctional protein FolD">
    <location>
        <begin position="1"/>
        <end position="284"/>
    </location>
</feature>
<feature type="binding site" evidence="1">
    <location>
        <begin position="166"/>
        <end position="168"/>
    </location>
    <ligand>
        <name>NADP(+)</name>
        <dbReference type="ChEBI" id="CHEBI:58349"/>
    </ligand>
</feature>
<feature type="binding site" evidence="1">
    <location>
        <position position="232"/>
    </location>
    <ligand>
        <name>NADP(+)</name>
        <dbReference type="ChEBI" id="CHEBI:58349"/>
    </ligand>
</feature>
<proteinExistence type="inferred from homology"/>